<feature type="chain" id="PRO_0000384178" description="Mitochondrial distribution and morphology protein 10">
    <location>
        <begin position="1"/>
        <end position="471"/>
    </location>
</feature>
<feature type="region of interest" description="Disordered" evidence="2">
    <location>
        <begin position="313"/>
        <end position="338"/>
    </location>
</feature>
<feature type="compositionally biased region" description="Polar residues" evidence="2">
    <location>
        <begin position="325"/>
        <end position="338"/>
    </location>
</feature>
<protein>
    <recommendedName>
        <fullName evidence="1">Mitochondrial distribution and morphology protein 10</fullName>
    </recommendedName>
    <alternativeName>
        <fullName evidence="1">Mitochondrial inheritance component MDM10</fullName>
    </alternativeName>
</protein>
<proteinExistence type="inferred from homology"/>
<reference key="1">
    <citation type="journal article" date="2004" name="Nature">
        <title>Genome evolution in yeasts.</title>
        <authorList>
            <person name="Dujon B."/>
            <person name="Sherman D."/>
            <person name="Fischer G."/>
            <person name="Durrens P."/>
            <person name="Casaregola S."/>
            <person name="Lafontaine I."/>
            <person name="de Montigny J."/>
            <person name="Marck C."/>
            <person name="Neuveglise C."/>
            <person name="Talla E."/>
            <person name="Goffard N."/>
            <person name="Frangeul L."/>
            <person name="Aigle M."/>
            <person name="Anthouard V."/>
            <person name="Babour A."/>
            <person name="Barbe V."/>
            <person name="Barnay S."/>
            <person name="Blanchin S."/>
            <person name="Beckerich J.-M."/>
            <person name="Beyne E."/>
            <person name="Bleykasten C."/>
            <person name="Boisrame A."/>
            <person name="Boyer J."/>
            <person name="Cattolico L."/>
            <person name="Confanioleri F."/>
            <person name="de Daruvar A."/>
            <person name="Despons L."/>
            <person name="Fabre E."/>
            <person name="Fairhead C."/>
            <person name="Ferry-Dumazet H."/>
            <person name="Groppi A."/>
            <person name="Hantraye F."/>
            <person name="Hennequin C."/>
            <person name="Jauniaux N."/>
            <person name="Joyet P."/>
            <person name="Kachouri R."/>
            <person name="Kerrest A."/>
            <person name="Koszul R."/>
            <person name="Lemaire M."/>
            <person name="Lesur I."/>
            <person name="Ma L."/>
            <person name="Muller H."/>
            <person name="Nicaud J.-M."/>
            <person name="Nikolski M."/>
            <person name="Oztas S."/>
            <person name="Ozier-Kalogeropoulos O."/>
            <person name="Pellenz S."/>
            <person name="Potier S."/>
            <person name="Richard G.-F."/>
            <person name="Straub M.-L."/>
            <person name="Suleau A."/>
            <person name="Swennen D."/>
            <person name="Tekaia F."/>
            <person name="Wesolowski-Louvel M."/>
            <person name="Westhof E."/>
            <person name="Wirth B."/>
            <person name="Zeniou-Meyer M."/>
            <person name="Zivanovic Y."/>
            <person name="Bolotin-Fukuhara M."/>
            <person name="Thierry A."/>
            <person name="Bouchier C."/>
            <person name="Caudron B."/>
            <person name="Scarpelli C."/>
            <person name="Gaillardin C."/>
            <person name="Weissenbach J."/>
            <person name="Wincker P."/>
            <person name="Souciet J.-L."/>
        </authorList>
    </citation>
    <scope>NUCLEOTIDE SEQUENCE [LARGE SCALE GENOMIC DNA]</scope>
    <source>
        <strain>ATCC 36239 / CBS 767 / BCRC 21394 / JCM 1990 / NBRC 0083 / IGC 2968</strain>
    </source>
</reference>
<accession>Q6BTX9</accession>
<comment type="function">
    <text evidence="1">Component of the ERMES/MDM complex, which serves as a molecular tether to connect the endoplasmic reticulum and mitochondria. Components of this complex are involved in the control of mitochondrial shape and protein biogenesis and may function in phospholipid exchange. MDM10 is involved in the late assembly steps of the general translocase of the mitochondrial outer membrane (TOM complex). Functions in the TOM40-specific route of the assembly of outer membrane beta-barrel proteins, including the association of TOM40 with the receptor TOM22 and small TOM proteins. Can associate with the SAM(core) complex as well as the MDM12-MMM1 complex, both involved in late steps of the major beta-barrel assembly pathway, that is responsible for biogenesis of all outer membrane beta-barrel proteins. May act as a switch that shuttles between both complexes and channels precursor proteins into the TOM40-specific pathway. Plays a role in mitochondrial morphology and in the inheritance of mitochondria.</text>
</comment>
<comment type="subunit">
    <text evidence="1">Component of the ER-mitochondria encounter structure (ERMES) or MDM complex, composed of MMM1, MDM10, MDM12 and MDM34. Associates with the mitochondrial outer membrane sorting assembly machinery SAM(core) complex.</text>
</comment>
<comment type="subcellular location">
    <subcellularLocation>
        <location evidence="1">Mitochondrion outer membrane</location>
        <topology evidence="1">Multi-pass membrane protein</topology>
    </subcellularLocation>
    <text evidence="1">The ERMES/MDM complex localizes to a few discrete foci (around 10 per single cell), that represent mitochondria-endoplasmic reticulum junctions. These foci are often found next to mtDNA nucleoids.</text>
</comment>
<comment type="domain">
    <text>Lacks alpha-helical transmembrane segments, suggesting that it resides in the membrane via beta-sheet conformations similar to those predicted for other outer membrane proteins and porin.</text>
</comment>
<comment type="similarity">
    <text evidence="1">Belongs to the MDM10 family.</text>
</comment>
<dbReference type="EMBL" id="CR382135">
    <property type="protein sequence ID" value="CAG86420.2"/>
    <property type="molecule type" value="Genomic_DNA"/>
</dbReference>
<dbReference type="RefSeq" id="XP_458340.2">
    <property type="nucleotide sequence ID" value="XM_458340.1"/>
</dbReference>
<dbReference type="SMR" id="Q6BTX9"/>
<dbReference type="FunCoup" id="Q6BTX9">
    <property type="interactions" value="70"/>
</dbReference>
<dbReference type="STRING" id="284592.Q6BTX9"/>
<dbReference type="GeneID" id="2900479"/>
<dbReference type="KEGG" id="dha:DEHA2C15092g"/>
<dbReference type="VEuPathDB" id="FungiDB:DEHA2C15092g"/>
<dbReference type="eggNOG" id="ENOG502QUN5">
    <property type="taxonomic scope" value="Eukaryota"/>
</dbReference>
<dbReference type="HOGENOM" id="CLU_026505_0_0_1"/>
<dbReference type="InParanoid" id="Q6BTX9"/>
<dbReference type="OMA" id="VPGYRQI"/>
<dbReference type="OrthoDB" id="2103793at2759"/>
<dbReference type="Proteomes" id="UP000000599">
    <property type="component" value="Chromosome C"/>
</dbReference>
<dbReference type="GO" id="GO:0032865">
    <property type="term" value="C:ERMES complex"/>
    <property type="evidence" value="ECO:0007669"/>
    <property type="project" value="UniProtKB-UniRule"/>
</dbReference>
<dbReference type="GO" id="GO:0001401">
    <property type="term" value="C:SAM complex"/>
    <property type="evidence" value="ECO:0007669"/>
    <property type="project" value="TreeGrafter"/>
</dbReference>
<dbReference type="GO" id="GO:0051654">
    <property type="term" value="P:establishment of mitochondrion localization"/>
    <property type="evidence" value="ECO:0007669"/>
    <property type="project" value="TreeGrafter"/>
</dbReference>
<dbReference type="GO" id="GO:0000002">
    <property type="term" value="P:mitochondrial genome maintenance"/>
    <property type="evidence" value="ECO:0007669"/>
    <property type="project" value="UniProtKB-UniRule"/>
</dbReference>
<dbReference type="GO" id="GO:0070096">
    <property type="term" value="P:mitochondrial outer membrane translocase complex assembly"/>
    <property type="evidence" value="ECO:0007669"/>
    <property type="project" value="UniProtKB-UniRule"/>
</dbReference>
<dbReference type="GO" id="GO:1990456">
    <property type="term" value="P:mitochondrion-endoplasmic reticulum membrane tethering"/>
    <property type="evidence" value="ECO:0007669"/>
    <property type="project" value="UniProtKB-UniRule"/>
</dbReference>
<dbReference type="GO" id="GO:0015914">
    <property type="term" value="P:phospholipid transport"/>
    <property type="evidence" value="ECO:0007669"/>
    <property type="project" value="TreeGrafter"/>
</dbReference>
<dbReference type="GO" id="GO:0045040">
    <property type="term" value="P:protein insertion into mitochondrial outer membrane"/>
    <property type="evidence" value="ECO:0007669"/>
    <property type="project" value="UniProtKB-UniRule"/>
</dbReference>
<dbReference type="HAMAP" id="MF_03102">
    <property type="entry name" value="Mdm10"/>
    <property type="match status" value="1"/>
</dbReference>
<dbReference type="InterPro" id="IPR027539">
    <property type="entry name" value="Mdm10"/>
</dbReference>
<dbReference type="PANTHER" id="PTHR28035">
    <property type="entry name" value="MITOCHONDRIAL DISTRIBUTION AND MORPHOLOGY PROTEIN 10"/>
    <property type="match status" value="1"/>
</dbReference>
<dbReference type="PANTHER" id="PTHR28035:SF1">
    <property type="entry name" value="MITOCHONDRIAL DISTRIBUTION AND MORPHOLOGY PROTEIN 10"/>
    <property type="match status" value="1"/>
</dbReference>
<dbReference type="Pfam" id="PF12519">
    <property type="entry name" value="MDM10"/>
    <property type="match status" value="1"/>
</dbReference>
<name>MDM10_DEBHA</name>
<organism>
    <name type="scientific">Debaryomyces hansenii (strain ATCC 36239 / CBS 767 / BCRC 21394 / JCM 1990 / NBRC 0083 / IGC 2968)</name>
    <name type="common">Yeast</name>
    <name type="synonym">Torulaspora hansenii</name>
    <dbReference type="NCBI Taxonomy" id="284592"/>
    <lineage>
        <taxon>Eukaryota</taxon>
        <taxon>Fungi</taxon>
        <taxon>Dikarya</taxon>
        <taxon>Ascomycota</taxon>
        <taxon>Saccharomycotina</taxon>
        <taxon>Pichiomycetes</taxon>
        <taxon>Debaryomycetaceae</taxon>
        <taxon>Debaryomyces</taxon>
    </lineage>
</organism>
<keyword id="KW-0472">Membrane</keyword>
<keyword id="KW-0496">Mitochondrion</keyword>
<keyword id="KW-1000">Mitochondrion outer membrane</keyword>
<keyword id="KW-1185">Reference proteome</keyword>
<keyword id="KW-0812">Transmembrane</keyword>
<keyword id="KW-1134">Transmembrane beta strand</keyword>
<gene>
    <name evidence="1" type="primary">MDM10</name>
    <name type="ordered locus">DEHA2C15092g</name>
</gene>
<sequence length="471" mass="52585">MYTYMEYLQKCFYKTTNWNEDNIFSNITATSSALLEFPIPNGCKVDLSSKATEHSASSFTLSNYHSINGSLAYLYSSIPLRNTMGTKDISLQDAISGFKMLELNSSTTNALQNPVYKNTHDSLLYGRMYFPGSALEAMIIKRISPQTQLLIKCINNPHLDKNGTMIVYLQKNAPKLSREFIYSTNEALFGFRCLYNMGSSESNLNRSINNSNLIPKFDNSVISIGTEIWYAALSMSPGLSTAFRYSTRSTSTGKPLTMTFACNPILGHISSAYTVKTSVASTFCSKYDFNVFSYASNLSLGFEIYNYSSSNTSNSAATPPRIKNSDSQVLSNNSTDSKGTVHIRSPDVLDYKNHSNVIISPIQTFDNYYHINPTLLPSTKNEFEEVRPPPLESQVDSNNETAMTAFENLVNESDFSSVIKLSTSLNDKMLKLLWKGRCKDFLVTTGVKMILNPITNTPEFNRFGISFSYAC</sequence>
<evidence type="ECO:0000255" key="1">
    <source>
        <dbReference type="HAMAP-Rule" id="MF_03102"/>
    </source>
</evidence>
<evidence type="ECO:0000256" key="2">
    <source>
        <dbReference type="SAM" id="MobiDB-lite"/>
    </source>
</evidence>